<organism>
    <name type="scientific">Escherichia coli (strain K12 / MC4100 / BW2952)</name>
    <dbReference type="NCBI Taxonomy" id="595496"/>
    <lineage>
        <taxon>Bacteria</taxon>
        <taxon>Pseudomonadati</taxon>
        <taxon>Pseudomonadota</taxon>
        <taxon>Gammaproteobacteria</taxon>
        <taxon>Enterobacterales</taxon>
        <taxon>Enterobacteriaceae</taxon>
        <taxon>Escherichia</taxon>
    </lineage>
</organism>
<proteinExistence type="inferred from homology"/>
<evidence type="ECO:0000255" key="1">
    <source>
        <dbReference type="HAMAP-Rule" id="MF_00415"/>
    </source>
</evidence>
<feature type="signal peptide" evidence="1">
    <location>
        <begin position="1"/>
        <end position="21"/>
    </location>
</feature>
<feature type="chain" id="PRO_1000206019" description="Flagellar L-ring protein">
    <location>
        <begin position="22"/>
        <end position="232"/>
    </location>
</feature>
<feature type="lipid moiety-binding region" description="N-palmitoyl cysteine" evidence="1">
    <location>
        <position position="22"/>
    </location>
</feature>
<feature type="lipid moiety-binding region" description="S-diacylglycerol cysteine" evidence="1">
    <location>
        <position position="22"/>
    </location>
</feature>
<name>FLGH_ECOBW</name>
<sequence>MQKNAAHTYAISSLLVLSLTGCAWIPSTPLVQGATSAQPVPGPTPVANGSIFQSAQPINYGYQPLFEDRRPRNIGDTLTIVLQENVSASKSSSANASRDGKTNFGFDTVPRYLQGLFGNARADVEASGGNTFNGKGGANASNTFSGTLTVTVDQVLVNGNLHVVGEKQIAINQGTEFIRFSGVVNPRTISGSNTVPSTQVADARIEYVGNGYINEAQNMGWLQRFFLNLSPM</sequence>
<comment type="function">
    <text evidence="1">Assembles around the rod to form the L-ring and probably protects the motor/basal body from shearing forces during rotation.</text>
</comment>
<comment type="subunit">
    <text evidence="1">The basal body constitutes a major portion of the flagellar organelle and consists of four rings (L,P,S, and M) mounted on a central rod.</text>
</comment>
<comment type="subcellular location">
    <subcellularLocation>
        <location evidence="1">Cell outer membrane</location>
        <topology evidence="1">Lipid-anchor</topology>
    </subcellularLocation>
    <subcellularLocation>
        <location evidence="1">Bacterial flagellum basal body</location>
    </subcellularLocation>
</comment>
<comment type="similarity">
    <text evidence="1">Belongs to the FlgH family.</text>
</comment>
<reference key="1">
    <citation type="journal article" date="2009" name="J. Bacteriol.">
        <title>Genomic sequencing reveals regulatory mutations and recombinational events in the widely used MC4100 lineage of Escherichia coli K-12.</title>
        <authorList>
            <person name="Ferenci T."/>
            <person name="Zhou Z."/>
            <person name="Betteridge T."/>
            <person name="Ren Y."/>
            <person name="Liu Y."/>
            <person name="Feng L."/>
            <person name="Reeves P.R."/>
            <person name="Wang L."/>
        </authorList>
    </citation>
    <scope>NUCLEOTIDE SEQUENCE [LARGE SCALE GENOMIC DNA]</scope>
    <source>
        <strain>K12 / MC4100 / BW2952</strain>
    </source>
</reference>
<accession>C4ZS19</accession>
<keyword id="KW-0975">Bacterial flagellum</keyword>
<keyword id="KW-0998">Cell outer membrane</keyword>
<keyword id="KW-0449">Lipoprotein</keyword>
<keyword id="KW-0472">Membrane</keyword>
<keyword id="KW-0564">Palmitate</keyword>
<keyword id="KW-0732">Signal</keyword>
<gene>
    <name evidence="1" type="primary">flgH</name>
    <name type="ordered locus">BWG_0927</name>
</gene>
<dbReference type="EMBL" id="CP001396">
    <property type="protein sequence ID" value="ACR63114.1"/>
    <property type="molecule type" value="Genomic_DNA"/>
</dbReference>
<dbReference type="RefSeq" id="WP_001295442.1">
    <property type="nucleotide sequence ID" value="NC_012759.1"/>
</dbReference>
<dbReference type="SMR" id="C4ZS19"/>
<dbReference type="GeneID" id="93776328"/>
<dbReference type="KEGG" id="ebw:BWG_0927"/>
<dbReference type="HOGENOM" id="CLU_069313_0_0_6"/>
<dbReference type="GO" id="GO:0009427">
    <property type="term" value="C:bacterial-type flagellum basal body, distal rod, L ring"/>
    <property type="evidence" value="ECO:0007669"/>
    <property type="project" value="InterPro"/>
</dbReference>
<dbReference type="GO" id="GO:0009279">
    <property type="term" value="C:cell outer membrane"/>
    <property type="evidence" value="ECO:0007669"/>
    <property type="project" value="UniProtKB-SubCell"/>
</dbReference>
<dbReference type="GO" id="GO:0003774">
    <property type="term" value="F:cytoskeletal motor activity"/>
    <property type="evidence" value="ECO:0007669"/>
    <property type="project" value="InterPro"/>
</dbReference>
<dbReference type="GO" id="GO:0071973">
    <property type="term" value="P:bacterial-type flagellum-dependent cell motility"/>
    <property type="evidence" value="ECO:0007669"/>
    <property type="project" value="InterPro"/>
</dbReference>
<dbReference type="HAMAP" id="MF_00415">
    <property type="entry name" value="FlgH"/>
    <property type="match status" value="1"/>
</dbReference>
<dbReference type="InterPro" id="IPR000527">
    <property type="entry name" value="Flag_Lring"/>
</dbReference>
<dbReference type="NCBIfam" id="NF001301">
    <property type="entry name" value="PRK00249.1-1"/>
    <property type="match status" value="1"/>
</dbReference>
<dbReference type="PANTHER" id="PTHR34933">
    <property type="entry name" value="FLAGELLAR L-RING PROTEIN"/>
    <property type="match status" value="1"/>
</dbReference>
<dbReference type="PANTHER" id="PTHR34933:SF3">
    <property type="entry name" value="FLAGELLAR L-RING PROTEIN"/>
    <property type="match status" value="1"/>
</dbReference>
<dbReference type="Pfam" id="PF02107">
    <property type="entry name" value="FlgH"/>
    <property type="match status" value="1"/>
</dbReference>
<dbReference type="PRINTS" id="PR01008">
    <property type="entry name" value="FLGLRINGFLGH"/>
</dbReference>
<dbReference type="PROSITE" id="PS51257">
    <property type="entry name" value="PROKAR_LIPOPROTEIN"/>
    <property type="match status" value="1"/>
</dbReference>
<protein>
    <recommendedName>
        <fullName evidence="1">Flagellar L-ring protein</fullName>
    </recommendedName>
    <alternativeName>
        <fullName evidence="1">Basal body L-ring protein</fullName>
    </alternativeName>
</protein>